<protein>
    <recommendedName>
        <fullName>Peroxidase 7</fullName>
        <shortName>Atperox P7</shortName>
        <ecNumber>1.11.1.7</ecNumber>
    </recommendedName>
    <alternativeName>
        <fullName>ATP30</fullName>
    </alternativeName>
</protein>
<sequence>MKLAVVSVVVILGVLVAWPVSAGRKDLPGAGGYGGDDDDDTKSLFPLDNLLSLNYYDRICPDFEKIVVTKVREWTKSDSSLGPALLRLIFHDCGVTGCDASVLLDYEGTERRSPASKTLRGFELIDDIKSEMEKSCPGKVSCADILTSASRAATVQLGGPYWPNVYGRRDSKHSYARDVEKVPSGRRDVTALLETFQSYGLNVLDLVVLSGAHTIGKASCGTIQSRLYNYNATSGSDPSIDAKYADYLQRRCRWASETVDLDPVTPAVFDNQYYINLQKHMGVLSTDQELVKDPRTAPLVKTFAEQSPQIFRQQFAVSMAKLVNVGVLTGEDRVGEIRKVCSKSNSRAY</sequence>
<reference key="1">
    <citation type="journal article" date="2000" name="Nature">
        <title>Sequence and analysis of chromosome 1 of the plant Arabidopsis thaliana.</title>
        <authorList>
            <person name="Theologis A."/>
            <person name="Ecker J.R."/>
            <person name="Palm C.J."/>
            <person name="Federspiel N.A."/>
            <person name="Kaul S."/>
            <person name="White O."/>
            <person name="Alonso J."/>
            <person name="Altafi H."/>
            <person name="Araujo R."/>
            <person name="Bowman C.L."/>
            <person name="Brooks S.Y."/>
            <person name="Buehler E."/>
            <person name="Chan A."/>
            <person name="Chao Q."/>
            <person name="Chen H."/>
            <person name="Cheuk R.F."/>
            <person name="Chin C.W."/>
            <person name="Chung M.K."/>
            <person name="Conn L."/>
            <person name="Conway A.B."/>
            <person name="Conway A.R."/>
            <person name="Creasy T.H."/>
            <person name="Dewar K."/>
            <person name="Dunn P."/>
            <person name="Etgu P."/>
            <person name="Feldblyum T.V."/>
            <person name="Feng J.-D."/>
            <person name="Fong B."/>
            <person name="Fujii C.Y."/>
            <person name="Gill J.E."/>
            <person name="Goldsmith A.D."/>
            <person name="Haas B."/>
            <person name="Hansen N.F."/>
            <person name="Hughes B."/>
            <person name="Huizar L."/>
            <person name="Hunter J.L."/>
            <person name="Jenkins J."/>
            <person name="Johnson-Hopson C."/>
            <person name="Khan S."/>
            <person name="Khaykin E."/>
            <person name="Kim C.J."/>
            <person name="Koo H.L."/>
            <person name="Kremenetskaia I."/>
            <person name="Kurtz D.B."/>
            <person name="Kwan A."/>
            <person name="Lam B."/>
            <person name="Langin-Hooper S."/>
            <person name="Lee A."/>
            <person name="Lee J.M."/>
            <person name="Lenz C.A."/>
            <person name="Li J.H."/>
            <person name="Li Y.-P."/>
            <person name="Lin X."/>
            <person name="Liu S.X."/>
            <person name="Liu Z.A."/>
            <person name="Luros J.S."/>
            <person name="Maiti R."/>
            <person name="Marziali A."/>
            <person name="Militscher J."/>
            <person name="Miranda M."/>
            <person name="Nguyen M."/>
            <person name="Nierman W.C."/>
            <person name="Osborne B.I."/>
            <person name="Pai G."/>
            <person name="Peterson J."/>
            <person name="Pham P.K."/>
            <person name="Rizzo M."/>
            <person name="Rooney T."/>
            <person name="Rowley D."/>
            <person name="Sakano H."/>
            <person name="Salzberg S.L."/>
            <person name="Schwartz J.R."/>
            <person name="Shinn P."/>
            <person name="Southwick A.M."/>
            <person name="Sun H."/>
            <person name="Tallon L.J."/>
            <person name="Tambunga G."/>
            <person name="Toriumi M.J."/>
            <person name="Town C.D."/>
            <person name="Utterback T."/>
            <person name="Van Aken S."/>
            <person name="Vaysberg M."/>
            <person name="Vysotskaia V.S."/>
            <person name="Walker M."/>
            <person name="Wu D."/>
            <person name="Yu G."/>
            <person name="Fraser C.M."/>
            <person name="Venter J.C."/>
            <person name="Davis R.W."/>
        </authorList>
    </citation>
    <scope>NUCLEOTIDE SEQUENCE [LARGE SCALE GENOMIC DNA]</scope>
    <source>
        <strain>cv. Columbia</strain>
    </source>
</reference>
<reference key="2">
    <citation type="journal article" date="2017" name="Plant J.">
        <title>Araport11: a complete reannotation of the Arabidopsis thaliana reference genome.</title>
        <authorList>
            <person name="Cheng C.Y."/>
            <person name="Krishnakumar V."/>
            <person name="Chan A.P."/>
            <person name="Thibaud-Nissen F."/>
            <person name="Schobel S."/>
            <person name="Town C.D."/>
        </authorList>
    </citation>
    <scope>GENOME REANNOTATION</scope>
    <source>
        <strain>cv. Columbia</strain>
    </source>
</reference>
<reference key="3">
    <citation type="journal article" date="2003" name="Science">
        <title>Empirical analysis of transcriptional activity in the Arabidopsis genome.</title>
        <authorList>
            <person name="Yamada K."/>
            <person name="Lim J."/>
            <person name="Dale J.M."/>
            <person name="Chen H."/>
            <person name="Shinn P."/>
            <person name="Palm C.J."/>
            <person name="Southwick A.M."/>
            <person name="Wu H.C."/>
            <person name="Kim C.J."/>
            <person name="Nguyen M."/>
            <person name="Pham P.K."/>
            <person name="Cheuk R.F."/>
            <person name="Karlin-Newmann G."/>
            <person name="Liu S.X."/>
            <person name="Lam B."/>
            <person name="Sakano H."/>
            <person name="Wu T."/>
            <person name="Yu G."/>
            <person name="Miranda M."/>
            <person name="Quach H.L."/>
            <person name="Tripp M."/>
            <person name="Chang C.H."/>
            <person name="Lee J.M."/>
            <person name="Toriumi M.J."/>
            <person name="Chan M.M."/>
            <person name="Tang C.C."/>
            <person name="Onodera C.S."/>
            <person name="Deng J.M."/>
            <person name="Akiyama K."/>
            <person name="Ansari Y."/>
            <person name="Arakawa T."/>
            <person name="Banh J."/>
            <person name="Banno F."/>
            <person name="Bowser L."/>
            <person name="Brooks S.Y."/>
            <person name="Carninci P."/>
            <person name="Chao Q."/>
            <person name="Choy N."/>
            <person name="Enju A."/>
            <person name="Goldsmith A.D."/>
            <person name="Gurjal M."/>
            <person name="Hansen N.F."/>
            <person name="Hayashizaki Y."/>
            <person name="Johnson-Hopson C."/>
            <person name="Hsuan V.W."/>
            <person name="Iida K."/>
            <person name="Karnes M."/>
            <person name="Khan S."/>
            <person name="Koesema E."/>
            <person name="Ishida J."/>
            <person name="Jiang P.X."/>
            <person name="Jones T."/>
            <person name="Kawai J."/>
            <person name="Kamiya A."/>
            <person name="Meyers C."/>
            <person name="Nakajima M."/>
            <person name="Narusaka M."/>
            <person name="Seki M."/>
            <person name="Sakurai T."/>
            <person name="Satou M."/>
            <person name="Tamse R."/>
            <person name="Vaysberg M."/>
            <person name="Wallender E.K."/>
            <person name="Wong C."/>
            <person name="Yamamura Y."/>
            <person name="Yuan S."/>
            <person name="Shinozaki K."/>
            <person name="Davis R.W."/>
            <person name="Theologis A."/>
            <person name="Ecker J.R."/>
        </authorList>
    </citation>
    <scope>NUCLEOTIDE SEQUENCE [LARGE SCALE MRNA]</scope>
    <source>
        <strain>cv. Columbia</strain>
    </source>
</reference>
<reference key="4">
    <citation type="journal article" date="2002" name="Gene">
        <title>Analysis and expression of the class III peroxidase large gene family in Arabidopsis thaliana.</title>
        <authorList>
            <person name="Tognolli M."/>
            <person name="Penel C."/>
            <person name="Greppin H."/>
            <person name="Simon P."/>
        </authorList>
    </citation>
    <scope>GENE FAMILY ORGANIZATION</scope>
    <scope>NOMENCLATURE</scope>
    <source>
        <strain>cv. Columbia</strain>
    </source>
</reference>
<organism>
    <name type="scientific">Arabidopsis thaliana</name>
    <name type="common">Mouse-ear cress</name>
    <dbReference type="NCBI Taxonomy" id="3702"/>
    <lineage>
        <taxon>Eukaryota</taxon>
        <taxon>Viridiplantae</taxon>
        <taxon>Streptophyta</taxon>
        <taxon>Embryophyta</taxon>
        <taxon>Tracheophyta</taxon>
        <taxon>Spermatophyta</taxon>
        <taxon>Magnoliopsida</taxon>
        <taxon>eudicotyledons</taxon>
        <taxon>Gunneridae</taxon>
        <taxon>Pentapetalae</taxon>
        <taxon>rosids</taxon>
        <taxon>malvids</taxon>
        <taxon>Brassicales</taxon>
        <taxon>Brassicaceae</taxon>
        <taxon>Camelineae</taxon>
        <taxon>Arabidopsis</taxon>
    </lineage>
</organism>
<proteinExistence type="evidence at transcript level"/>
<feature type="signal peptide" evidence="1">
    <location>
        <begin position="1"/>
        <end position="22"/>
    </location>
</feature>
<feature type="chain" id="PRO_0000023673" description="Peroxidase 7">
    <location>
        <begin position="23"/>
        <end position="349"/>
    </location>
</feature>
<feature type="active site" description="Proton acceptor" evidence="2 3">
    <location>
        <position position="91"/>
    </location>
</feature>
<feature type="binding site" evidence="2">
    <location>
        <position position="92"/>
    </location>
    <ligand>
        <name>Ca(2+)</name>
        <dbReference type="ChEBI" id="CHEBI:29108"/>
        <label>1</label>
    </ligand>
</feature>
<feature type="binding site" evidence="2">
    <location>
        <position position="95"/>
    </location>
    <ligand>
        <name>Ca(2+)</name>
        <dbReference type="ChEBI" id="CHEBI:29108"/>
        <label>1</label>
    </ligand>
</feature>
<feature type="binding site" evidence="2">
    <location>
        <position position="97"/>
    </location>
    <ligand>
        <name>Ca(2+)</name>
        <dbReference type="ChEBI" id="CHEBI:29108"/>
        <label>1</label>
    </ligand>
</feature>
<feature type="binding site" evidence="2">
    <location>
        <position position="99"/>
    </location>
    <ligand>
        <name>Ca(2+)</name>
        <dbReference type="ChEBI" id="CHEBI:29108"/>
        <label>1</label>
    </ligand>
</feature>
<feature type="binding site" evidence="2">
    <location>
        <position position="101"/>
    </location>
    <ligand>
        <name>Ca(2+)</name>
        <dbReference type="ChEBI" id="CHEBI:29108"/>
        <label>1</label>
    </ligand>
</feature>
<feature type="binding site" evidence="2">
    <location>
        <position position="183"/>
    </location>
    <ligand>
        <name>substrate</name>
    </ligand>
</feature>
<feature type="binding site" description="axial binding residue" evidence="2">
    <location>
        <position position="213"/>
    </location>
    <ligand>
        <name>heme b</name>
        <dbReference type="ChEBI" id="CHEBI:60344"/>
    </ligand>
    <ligandPart>
        <name>Fe</name>
        <dbReference type="ChEBI" id="CHEBI:18248"/>
    </ligandPart>
</feature>
<feature type="binding site" evidence="2">
    <location>
        <position position="214"/>
    </location>
    <ligand>
        <name>Ca(2+)</name>
        <dbReference type="ChEBI" id="CHEBI:29108"/>
        <label>2</label>
    </ligand>
</feature>
<feature type="binding site" evidence="2">
    <location>
        <position position="262"/>
    </location>
    <ligand>
        <name>Ca(2+)</name>
        <dbReference type="ChEBI" id="CHEBI:29108"/>
        <label>2</label>
    </ligand>
</feature>
<feature type="binding site" evidence="2">
    <location>
        <position position="265"/>
    </location>
    <ligand>
        <name>Ca(2+)</name>
        <dbReference type="ChEBI" id="CHEBI:29108"/>
        <label>2</label>
    </ligand>
</feature>
<feature type="binding site" evidence="2">
    <location>
        <position position="270"/>
    </location>
    <ligand>
        <name>Ca(2+)</name>
        <dbReference type="ChEBI" id="CHEBI:29108"/>
        <label>2</label>
    </ligand>
</feature>
<feature type="site" description="Transition state stabilizer" evidence="2">
    <location>
        <position position="87"/>
    </location>
</feature>
<feature type="glycosylation site" description="N-linked (GlcNAc...) asparagine" evidence="1">
    <location>
        <position position="231"/>
    </location>
</feature>
<feature type="disulfide bond" evidence="2">
    <location>
        <begin position="60"/>
        <end position="136"/>
    </location>
</feature>
<feature type="disulfide bond" evidence="2">
    <location>
        <begin position="93"/>
        <end position="98"/>
    </location>
</feature>
<feature type="disulfide bond" evidence="2">
    <location>
        <begin position="142"/>
        <end position="341"/>
    </location>
</feature>
<feature type="disulfide bond" evidence="2">
    <location>
        <begin position="220"/>
        <end position="252"/>
    </location>
</feature>
<comment type="function">
    <text>Removal of H(2)O(2), oxidation of toxic reductants, biosynthesis and degradation of lignin, suberization, auxin catabolism, response to environmental stresses such as wounding, pathogen attack and oxidative stress. These functions might be dependent on each isozyme/isoform in each plant tissue.</text>
</comment>
<comment type="catalytic activity">
    <reaction>
        <text>2 a phenolic donor + H2O2 = 2 a phenolic radical donor + 2 H2O</text>
        <dbReference type="Rhea" id="RHEA:56136"/>
        <dbReference type="ChEBI" id="CHEBI:15377"/>
        <dbReference type="ChEBI" id="CHEBI:16240"/>
        <dbReference type="ChEBI" id="CHEBI:139520"/>
        <dbReference type="ChEBI" id="CHEBI:139521"/>
        <dbReference type="EC" id="1.11.1.7"/>
    </reaction>
</comment>
<comment type="cofactor">
    <cofactor evidence="2">
        <name>heme b</name>
        <dbReference type="ChEBI" id="CHEBI:60344"/>
    </cofactor>
    <text evidence="2">Binds 1 heme b (iron(II)-protoporphyrin IX) group per subunit.</text>
</comment>
<comment type="cofactor">
    <cofactor evidence="2">
        <name>Ca(2+)</name>
        <dbReference type="ChEBI" id="CHEBI:29108"/>
    </cofactor>
    <text evidence="2">Binds 2 calcium ions per subunit.</text>
</comment>
<comment type="subcellular location">
    <subcellularLocation>
        <location evidence="2">Secreted</location>
    </subcellularLocation>
</comment>
<comment type="miscellaneous">
    <text>There are 73 peroxidase genes in A.thaliana.</text>
</comment>
<comment type="similarity">
    <text evidence="2">Belongs to the peroxidase family. Classical plant (class III) peroxidase subfamily.</text>
</comment>
<comment type="sequence caution" evidence="4">
    <conflict type="frameshift">
        <sequence resource="EMBL" id="BT002890"/>
    </conflict>
</comment>
<keyword id="KW-0106">Calcium</keyword>
<keyword id="KW-1015">Disulfide bond</keyword>
<keyword id="KW-0325">Glycoprotein</keyword>
<keyword id="KW-0349">Heme</keyword>
<keyword id="KW-0376">Hydrogen peroxide</keyword>
<keyword id="KW-0408">Iron</keyword>
<keyword id="KW-0479">Metal-binding</keyword>
<keyword id="KW-0560">Oxidoreductase</keyword>
<keyword id="KW-0575">Peroxidase</keyword>
<keyword id="KW-1185">Reference proteome</keyword>
<keyword id="KW-0964">Secreted</keyword>
<keyword id="KW-0732">Signal</keyword>
<gene>
    <name type="primary">PER7</name>
    <name type="synonym">P7</name>
    <name type="ordered locus">At1g30870</name>
    <name type="ORF">F17F8.26</name>
    <name type="ORF">T17H7.19</name>
</gene>
<name>PER7_ARATH</name>
<evidence type="ECO:0000255" key="1"/>
<evidence type="ECO:0000255" key="2">
    <source>
        <dbReference type="PROSITE-ProRule" id="PRU00297"/>
    </source>
</evidence>
<evidence type="ECO:0000255" key="3">
    <source>
        <dbReference type="PROSITE-ProRule" id="PRU10012"/>
    </source>
</evidence>
<evidence type="ECO:0000305" key="4"/>
<dbReference type="EC" id="1.11.1.7"/>
<dbReference type="EMBL" id="AC000107">
    <property type="protein sequence ID" value="AAF98194.1"/>
    <property type="molecule type" value="Genomic_DNA"/>
</dbReference>
<dbReference type="EMBL" id="AC004135">
    <property type="protein sequence ID" value="AAD32944.1"/>
    <property type="molecule type" value="Genomic_DNA"/>
</dbReference>
<dbReference type="EMBL" id="CP002684">
    <property type="protein sequence ID" value="AEE31287.1"/>
    <property type="molecule type" value="Genomic_DNA"/>
</dbReference>
<dbReference type="EMBL" id="BT002890">
    <property type="status" value="NOT_ANNOTATED_CDS"/>
    <property type="molecule type" value="mRNA"/>
</dbReference>
<dbReference type="RefSeq" id="NP_174372.1">
    <property type="nucleotide sequence ID" value="NM_102824.3"/>
</dbReference>
<dbReference type="SMR" id="Q9SY33"/>
<dbReference type="FunCoup" id="Q9SY33">
    <property type="interactions" value="360"/>
</dbReference>
<dbReference type="STRING" id="3702.Q9SY33"/>
<dbReference type="PeroxiBase" id="83">
    <property type="entry name" value="AtPrx07"/>
</dbReference>
<dbReference type="GlyCosmos" id="Q9SY33">
    <property type="glycosylation" value="1 site, No reported glycans"/>
</dbReference>
<dbReference type="GlyGen" id="Q9SY33">
    <property type="glycosylation" value="2 sites"/>
</dbReference>
<dbReference type="PaxDb" id="3702-AT1G30870.1"/>
<dbReference type="ProteomicsDB" id="236775"/>
<dbReference type="EnsemblPlants" id="AT1G30870.1">
    <property type="protein sequence ID" value="AT1G30870.1"/>
    <property type="gene ID" value="AT1G30870"/>
</dbReference>
<dbReference type="GeneID" id="839971"/>
<dbReference type="Gramene" id="AT1G30870.1">
    <property type="protein sequence ID" value="AT1G30870.1"/>
    <property type="gene ID" value="AT1G30870"/>
</dbReference>
<dbReference type="KEGG" id="ath:AT1G30870"/>
<dbReference type="Araport" id="AT1G30870"/>
<dbReference type="TAIR" id="AT1G30870">
    <property type="gene designation" value="PER7"/>
</dbReference>
<dbReference type="eggNOG" id="ENOG502QTJB">
    <property type="taxonomic scope" value="Eukaryota"/>
</dbReference>
<dbReference type="HOGENOM" id="CLU_010543_0_1_1"/>
<dbReference type="InParanoid" id="Q9SY33"/>
<dbReference type="OMA" id="PMGHENI"/>
<dbReference type="PhylomeDB" id="Q9SY33"/>
<dbReference type="BioCyc" id="ARA:AT1G30870-MONOMER"/>
<dbReference type="PRO" id="PR:Q9SY33"/>
<dbReference type="Proteomes" id="UP000006548">
    <property type="component" value="Chromosome 1"/>
</dbReference>
<dbReference type="ExpressionAtlas" id="Q9SY33">
    <property type="expression patterns" value="baseline and differential"/>
</dbReference>
<dbReference type="GO" id="GO:0005576">
    <property type="term" value="C:extracellular region"/>
    <property type="evidence" value="ECO:0007669"/>
    <property type="project" value="UniProtKB-SubCell"/>
</dbReference>
<dbReference type="GO" id="GO:0020037">
    <property type="term" value="F:heme binding"/>
    <property type="evidence" value="ECO:0007669"/>
    <property type="project" value="InterPro"/>
</dbReference>
<dbReference type="GO" id="GO:0140825">
    <property type="term" value="F:lactoperoxidase activity"/>
    <property type="evidence" value="ECO:0007669"/>
    <property type="project" value="UniProtKB-EC"/>
</dbReference>
<dbReference type="GO" id="GO:0046872">
    <property type="term" value="F:metal ion binding"/>
    <property type="evidence" value="ECO:0007669"/>
    <property type="project" value="UniProtKB-KW"/>
</dbReference>
<dbReference type="GO" id="GO:0042744">
    <property type="term" value="P:hydrogen peroxide catabolic process"/>
    <property type="evidence" value="ECO:0007669"/>
    <property type="project" value="UniProtKB-KW"/>
</dbReference>
<dbReference type="GO" id="GO:0006979">
    <property type="term" value="P:response to oxidative stress"/>
    <property type="evidence" value="ECO:0007669"/>
    <property type="project" value="InterPro"/>
</dbReference>
<dbReference type="CDD" id="cd00693">
    <property type="entry name" value="secretory_peroxidase"/>
    <property type="match status" value="1"/>
</dbReference>
<dbReference type="FunFam" id="1.10.420.10:FF:000001">
    <property type="entry name" value="Peroxidase"/>
    <property type="match status" value="1"/>
</dbReference>
<dbReference type="Gene3D" id="1.10.520.10">
    <property type="match status" value="1"/>
</dbReference>
<dbReference type="Gene3D" id="1.10.420.10">
    <property type="entry name" value="Peroxidase, domain 2"/>
    <property type="match status" value="1"/>
</dbReference>
<dbReference type="InterPro" id="IPR002016">
    <property type="entry name" value="Haem_peroxidase"/>
</dbReference>
<dbReference type="InterPro" id="IPR010255">
    <property type="entry name" value="Haem_peroxidase_sf"/>
</dbReference>
<dbReference type="InterPro" id="IPR000823">
    <property type="entry name" value="Peroxidase_pln"/>
</dbReference>
<dbReference type="InterPro" id="IPR019794">
    <property type="entry name" value="Peroxidases_AS"/>
</dbReference>
<dbReference type="InterPro" id="IPR019793">
    <property type="entry name" value="Peroxidases_heam-ligand_BS"/>
</dbReference>
<dbReference type="InterPro" id="IPR033905">
    <property type="entry name" value="Secretory_peroxidase"/>
</dbReference>
<dbReference type="PANTHER" id="PTHR31517">
    <property type="match status" value="1"/>
</dbReference>
<dbReference type="PANTHER" id="PTHR31517:SF17">
    <property type="entry name" value="PEROXIDASE 6"/>
    <property type="match status" value="1"/>
</dbReference>
<dbReference type="Pfam" id="PF00141">
    <property type="entry name" value="peroxidase"/>
    <property type="match status" value="1"/>
</dbReference>
<dbReference type="PRINTS" id="PR00458">
    <property type="entry name" value="PEROXIDASE"/>
</dbReference>
<dbReference type="PRINTS" id="PR00461">
    <property type="entry name" value="PLPEROXIDASE"/>
</dbReference>
<dbReference type="SUPFAM" id="SSF48113">
    <property type="entry name" value="Heme-dependent peroxidases"/>
    <property type="match status" value="1"/>
</dbReference>
<dbReference type="PROSITE" id="PS00435">
    <property type="entry name" value="PEROXIDASE_1"/>
    <property type="match status" value="1"/>
</dbReference>
<dbReference type="PROSITE" id="PS00436">
    <property type="entry name" value="PEROXIDASE_2"/>
    <property type="match status" value="1"/>
</dbReference>
<dbReference type="PROSITE" id="PS50873">
    <property type="entry name" value="PEROXIDASE_4"/>
    <property type="match status" value="1"/>
</dbReference>
<accession>Q9SY33</accession>